<reference key="1">
    <citation type="journal article" date="1995" name="Gene">
        <title>Cloning of the bovine interleukin-3-encoding cDNA.</title>
        <authorList>
            <person name="Mwangi S.M."/>
            <person name="Logan-Henfrey L."/>
            <person name="McInnes C."/>
            <person name="Mertens B."/>
        </authorList>
    </citation>
    <scope>NUCLEOTIDE SEQUENCE [MRNA]</scope>
    <source>
        <tissue>Blood</tissue>
    </source>
</reference>
<reference key="2">
    <citation type="thesis" date="1996" institute="International Livestock Research Institute" country="Kenya">
        <authorList>
            <person name="Mwangi S.M."/>
        </authorList>
    </citation>
    <scope>NUCLEOTIDE SEQUENCE [GENOMIC DNA] OF 1-29</scope>
    <source>
        <strain>N'Dama</strain>
    </source>
</reference>
<comment type="function">
    <text evidence="1">Granulocyte/macrophage colony-stimulating factors are cytokines that act in hematopoiesis by controlling the production, differentiation, and function of 2 related white cell populations of the blood, the granulocytes and the monocytes-macrophages.</text>
</comment>
<comment type="function">
    <text evidence="1">This CSF induces granulocytes, macrophages, mast cells, stem cells, erythroid cells, eosinophils and megakaryocytes.</text>
</comment>
<comment type="subunit">
    <text evidence="1">Monomer.</text>
</comment>
<comment type="subcellular location">
    <subcellularLocation>
        <location>Secreted</location>
    </subcellularLocation>
</comment>
<comment type="similarity">
    <text evidence="3">Belongs to the IL-3 family.</text>
</comment>
<protein>
    <recommendedName>
        <fullName>Interleukin-3</fullName>
        <shortName>IL-3</shortName>
    </recommendedName>
    <alternativeName>
        <fullName>Hematopoietic growth factor</fullName>
    </alternativeName>
    <alternativeName>
        <fullName>Mast cell growth factor</fullName>
        <shortName>MCGF</shortName>
    </alternativeName>
    <alternativeName>
        <fullName>Multipotential colony-stimulating factor</fullName>
    </alternativeName>
    <alternativeName>
        <fullName>P-cell-stimulating factor</fullName>
    </alternativeName>
</protein>
<feature type="signal peptide" evidence="2">
    <location>
        <begin position="1"/>
        <end position="17"/>
    </location>
</feature>
<feature type="chain" id="PRO_0000015513" description="Interleukin-3">
    <location>
        <begin position="18"/>
        <end position="144"/>
    </location>
</feature>
<name>IL3_BOVIN</name>
<gene>
    <name type="primary">IL3</name>
</gene>
<evidence type="ECO:0000250" key="1"/>
<evidence type="ECO:0000255" key="2"/>
<evidence type="ECO:0000305" key="3"/>
<organism>
    <name type="scientific">Bos taurus</name>
    <name type="common">Bovine</name>
    <dbReference type="NCBI Taxonomy" id="9913"/>
    <lineage>
        <taxon>Eukaryota</taxon>
        <taxon>Metazoa</taxon>
        <taxon>Chordata</taxon>
        <taxon>Craniata</taxon>
        <taxon>Vertebrata</taxon>
        <taxon>Euteleostomi</taxon>
        <taxon>Mammalia</taxon>
        <taxon>Eutheria</taxon>
        <taxon>Laurasiatheria</taxon>
        <taxon>Artiodactyla</taxon>
        <taxon>Ruminantia</taxon>
        <taxon>Pecora</taxon>
        <taxon>Bovidae</taxon>
        <taxon>Bovinae</taxon>
        <taxon>Bos</taxon>
    </lineage>
</organism>
<keyword id="KW-0202">Cytokine</keyword>
<keyword id="KW-0339">Growth factor</keyword>
<keyword id="KW-1185">Reference proteome</keyword>
<keyword id="KW-0964">Secreted</keyword>
<keyword id="KW-0732">Signal</keyword>
<sequence length="144" mass="16380">MSSLSILHLLLLLLALHAPQAKGLPVVTSRTPYSMLMKEIMDDLKKITPSPEGSLNSDEKNFLTKESLLQANLKVFMTFATDTFGSDSKIMKNLKEFQPVLPTATPTEDPIFIENKNLGDFRMKLEEYLVIIRNYLKSKNIWFS</sequence>
<accession>P49875</accession>
<dbReference type="EMBL" id="L31893">
    <property type="protein sequence ID" value="AAA99502.1"/>
    <property type="molecule type" value="mRNA"/>
</dbReference>
<dbReference type="EMBL" id="U72065">
    <property type="protein sequence ID" value="AAB17188.1"/>
    <property type="molecule type" value="Genomic_DNA"/>
</dbReference>
<dbReference type="PIR" id="JC4266">
    <property type="entry name" value="JC4266"/>
</dbReference>
<dbReference type="RefSeq" id="NP_776345.1">
    <property type="nucleotide sequence ID" value="NM_173920.2"/>
</dbReference>
<dbReference type="SMR" id="P49875"/>
<dbReference type="FunCoup" id="P49875">
    <property type="interactions" value="204"/>
</dbReference>
<dbReference type="STRING" id="9913.ENSBTAP00000002774"/>
<dbReference type="PaxDb" id="9913-ENSBTAP00000002774"/>
<dbReference type="Ensembl" id="ENSBTAT00000002774.3">
    <property type="protein sequence ID" value="ENSBTAP00000002774.2"/>
    <property type="gene ID" value="ENSBTAG00000002140.3"/>
</dbReference>
<dbReference type="GeneID" id="280823"/>
<dbReference type="KEGG" id="bta:280823"/>
<dbReference type="CTD" id="3562"/>
<dbReference type="VEuPathDB" id="HostDB:ENSBTAG00000002140"/>
<dbReference type="VGNC" id="VGNC:112605">
    <property type="gene designation" value="IL3"/>
</dbReference>
<dbReference type="eggNOG" id="ENOG502TD4X">
    <property type="taxonomic scope" value="Eukaryota"/>
</dbReference>
<dbReference type="GeneTree" id="ENSGT00940000163393"/>
<dbReference type="HOGENOM" id="CLU_144877_0_0_1"/>
<dbReference type="InParanoid" id="P49875"/>
<dbReference type="OMA" id="IKDGDWN"/>
<dbReference type="OrthoDB" id="9680893at2759"/>
<dbReference type="TreeFam" id="TF338567"/>
<dbReference type="Reactome" id="R-BTA-512988">
    <property type="pathway name" value="Interleukin-3, Interleukin-5 and GM-CSF signaling"/>
</dbReference>
<dbReference type="Reactome" id="R-BTA-5673001">
    <property type="pathway name" value="RAF/MAP kinase cascade"/>
</dbReference>
<dbReference type="Reactome" id="R-BTA-912526">
    <property type="pathway name" value="Interleukin receptor SHC signaling"/>
</dbReference>
<dbReference type="Proteomes" id="UP000009136">
    <property type="component" value="Chromosome 7"/>
</dbReference>
<dbReference type="Bgee" id="ENSBTAG00000002140">
    <property type="expression patterns" value="Expressed in abdominal lymph node and 1 other cell type or tissue"/>
</dbReference>
<dbReference type="GO" id="GO:0005615">
    <property type="term" value="C:extracellular space"/>
    <property type="evidence" value="ECO:0000250"/>
    <property type="project" value="UniProtKB"/>
</dbReference>
<dbReference type="GO" id="GO:0005125">
    <property type="term" value="F:cytokine activity"/>
    <property type="evidence" value="ECO:0000250"/>
    <property type="project" value="UniProtKB"/>
</dbReference>
<dbReference type="GO" id="GO:0008083">
    <property type="term" value="F:growth factor activity"/>
    <property type="evidence" value="ECO:0007669"/>
    <property type="project" value="UniProtKB-KW"/>
</dbReference>
<dbReference type="GO" id="GO:0005135">
    <property type="term" value="F:interleukin-3 receptor binding"/>
    <property type="evidence" value="ECO:0007669"/>
    <property type="project" value="InterPro"/>
</dbReference>
<dbReference type="GO" id="GO:0006955">
    <property type="term" value="P:immune response"/>
    <property type="evidence" value="ECO:0007669"/>
    <property type="project" value="InterPro"/>
</dbReference>
<dbReference type="GO" id="GO:0038156">
    <property type="term" value="P:interleukin-3-mediated signaling pathway"/>
    <property type="evidence" value="ECO:0000318"/>
    <property type="project" value="GO_Central"/>
</dbReference>
<dbReference type="GO" id="GO:0009891">
    <property type="term" value="P:positive regulation of biosynthetic process"/>
    <property type="evidence" value="ECO:0007669"/>
    <property type="project" value="UniProtKB-ARBA"/>
</dbReference>
<dbReference type="GO" id="GO:0008284">
    <property type="term" value="P:positive regulation of cell population proliferation"/>
    <property type="evidence" value="ECO:0000250"/>
    <property type="project" value="UniProtKB"/>
</dbReference>
<dbReference type="FunFam" id="1.20.1250.10:FF:000067">
    <property type="entry name" value="Interleukin-3"/>
    <property type="match status" value="1"/>
</dbReference>
<dbReference type="Gene3D" id="1.20.1250.10">
    <property type="match status" value="1"/>
</dbReference>
<dbReference type="InterPro" id="IPR009079">
    <property type="entry name" value="4_helix_cytokine-like_core"/>
</dbReference>
<dbReference type="InterPro" id="IPR002183">
    <property type="entry name" value="IL-3"/>
</dbReference>
<dbReference type="PANTHER" id="PTHR48489">
    <property type="entry name" value="INTERLEUKIN-3"/>
    <property type="match status" value="1"/>
</dbReference>
<dbReference type="PANTHER" id="PTHR48489:SF1">
    <property type="entry name" value="INTERLEUKIN-3"/>
    <property type="match status" value="1"/>
</dbReference>
<dbReference type="Pfam" id="PF02059">
    <property type="entry name" value="IL3"/>
    <property type="match status" value="1"/>
</dbReference>
<dbReference type="PIRSF" id="PIRSF001939">
    <property type="entry name" value="IL-3"/>
    <property type="match status" value="1"/>
</dbReference>
<dbReference type="PRINTS" id="PR00430">
    <property type="entry name" value="INTERLEUKIN3"/>
</dbReference>
<dbReference type="SUPFAM" id="SSF47266">
    <property type="entry name" value="4-helical cytokines"/>
    <property type="match status" value="1"/>
</dbReference>
<proteinExistence type="evidence at transcript level"/>